<feature type="chain" id="PRO_0000350626" description="PAN2-PAN3 deadenylation complex subunit pan3">
    <location>
        <begin position="1"/>
        <end position="787"/>
    </location>
</feature>
<feature type="zinc finger region" description="C3H1-type" evidence="1">
    <location>
        <begin position="23"/>
        <end position="51"/>
    </location>
</feature>
<feature type="region of interest" description="Disordered" evidence="2">
    <location>
        <begin position="1"/>
        <end position="20"/>
    </location>
</feature>
<feature type="region of interest" description="Disordered" evidence="2">
    <location>
        <begin position="131"/>
        <end position="162"/>
    </location>
</feature>
<feature type="region of interest" description="Disordered" evidence="2">
    <location>
        <begin position="179"/>
        <end position="210"/>
    </location>
</feature>
<feature type="region of interest" description="Disordered" evidence="2">
    <location>
        <begin position="226"/>
        <end position="291"/>
    </location>
</feature>
<feature type="region of interest" description="Pseudokinase domain" evidence="1">
    <location>
        <begin position="365"/>
        <end position="650"/>
    </location>
</feature>
<feature type="region of interest" description="Knob domain" evidence="1">
    <location>
        <begin position="690"/>
        <end position="787"/>
    </location>
</feature>
<feature type="coiled-coil region" evidence="1">
    <location>
        <begin position="651"/>
        <end position="689"/>
    </location>
</feature>
<feature type="short sequence motif" description="PABPC-interacting motif-2 (PAM-2)" evidence="3">
    <location>
        <begin position="185"/>
        <end position="200"/>
    </location>
</feature>
<feature type="compositionally biased region" description="Low complexity" evidence="2">
    <location>
        <begin position="11"/>
        <end position="20"/>
    </location>
</feature>
<feature type="compositionally biased region" description="Low complexity" evidence="2">
    <location>
        <begin position="143"/>
        <end position="154"/>
    </location>
</feature>
<feature type="compositionally biased region" description="Low complexity" evidence="2">
    <location>
        <begin position="200"/>
        <end position="210"/>
    </location>
</feature>
<feature type="compositionally biased region" description="Polar residues" evidence="2">
    <location>
        <begin position="265"/>
        <end position="290"/>
    </location>
</feature>
<feature type="binding site" evidence="1">
    <location>
        <position position="422"/>
    </location>
    <ligand>
        <name>ATP</name>
        <dbReference type="ChEBI" id="CHEBI:30616"/>
    </ligand>
</feature>
<feature type="binding site" evidence="1">
    <location>
        <begin position="471"/>
        <end position="478"/>
    </location>
    <ligand>
        <name>ATP</name>
        <dbReference type="ChEBI" id="CHEBI:30616"/>
    </ligand>
</feature>
<feature type="binding site" evidence="1">
    <location>
        <begin position="545"/>
        <end position="546"/>
    </location>
    <ligand>
        <name>ATP</name>
        <dbReference type="ChEBI" id="CHEBI:30616"/>
    </ligand>
</feature>
<protein>
    <recommendedName>
        <fullName evidence="1">PAN2-PAN3 deadenylation complex subunit pan3</fullName>
    </recommendedName>
    <alternativeName>
        <fullName evidence="1">PAB1P-dependent poly(A)-specific ribonuclease</fullName>
    </alternativeName>
    <alternativeName>
        <fullName evidence="1">Poly(A)-nuclease deadenylation complex subunit 3</fullName>
        <shortName evidence="1">PAN deadenylation complex subunit 3</shortName>
    </alternativeName>
</protein>
<name>PAN3_XENTR</name>
<sequence>MNSGLTPSPSPAVAAAGPAGVPGSKLKFCRYYAKDRTCFYGDECQFLHDDQLGGIHGNGNSPLSLPGGGPAAVYPQPVTPVGSKKLDLAGLEAQRLAIPGLDGGAIPDTSLTDSYFSTSFIGLNGFGSPGEATYPRMQQRMTNSSSSPSLLNDSAKPYAAHDPLGSPASAMFNDFGGLTMSQRRKTPNPTASEFIPKGGSTSRLSNMSQSSMSAFSQALFSHPSMGGPTGAGLAPGMSLSAGSSPLHSPKITPHTSPAPRRRSHTPNPANYMVPTSASTPVTNSVSQPPSTGEIIQKATVGGTTYFYTDTTPAPLTGMVFPNYHIYPPTAPHIAYMQPKANAPSFFMADELRQELINRHLITMAQIDQADMPGVPAEVDSYHSLFPLEPLPPPNRIKTSNFGYITSCYKAVNSKDDLPYCLRRIHGFRLVNTKCMSLVDTWKKIQHSNIVTLREMFTTKAFGEHSLVFAYDFHAGSETMMSRHFNDPSADAYFTKRKWGQHDGPLPRQHAGLLPESLIWAYIVQLSSALRTIHTAGLACRVMDPTKILITGKTRLRVNCVGIFDVLTYDGSQNNPVALMPQYQQADLISLGKVVLALACNSLAGIQRENLQKAMELVTINYSSDLKNLILYLLTEQNRMRSVNDIMPMIGARFYTQLDAAQMRNDVIEEDLAKEVQNGRLFRLLAKLGTINERPEFQKDPAWSETGDRYLLKLFRDHLFHQVTEAGTPWIDLSHIVSCLNKLDAGVPEKISLISRDEKSVLVVTYSDLKRCFENTFQELVAAANGQL</sequence>
<reference key="1">
    <citation type="submission" date="2006-10" db="EMBL/GenBank/DDBJ databases">
        <authorList>
            <consortium name="Sanger Xenopus tropicalis EST/cDNA project"/>
        </authorList>
    </citation>
    <scope>NUCLEOTIDE SEQUENCE [LARGE SCALE MRNA]</scope>
    <source>
        <tissue>Egg</tissue>
    </source>
</reference>
<reference key="2">
    <citation type="submission" date="2006-12" db="EMBL/GenBank/DDBJ databases">
        <authorList>
            <consortium name="NIH - Xenopus Gene Collection (XGC) project"/>
        </authorList>
    </citation>
    <scope>NUCLEOTIDE SEQUENCE [LARGE SCALE MRNA]</scope>
    <source>
        <tissue>Testis</tissue>
    </source>
</reference>
<accession>A1L1C7</accession>
<dbReference type="EMBL" id="CR855590">
    <property type="status" value="NOT_ANNOTATED_CDS"/>
    <property type="molecule type" value="mRNA"/>
</dbReference>
<dbReference type="EMBL" id="BC128994">
    <property type="protein sequence ID" value="AAI28995.1"/>
    <property type="molecule type" value="mRNA"/>
</dbReference>
<dbReference type="RefSeq" id="NP_001017301.1">
    <property type="nucleotide sequence ID" value="NM_001017301.3"/>
</dbReference>
<dbReference type="SMR" id="A1L1C7"/>
<dbReference type="FunCoup" id="A1L1C7">
    <property type="interactions" value="2462"/>
</dbReference>
<dbReference type="STRING" id="8364.ENSXETP00000044401"/>
<dbReference type="PaxDb" id="8364-ENSXETP00000025796"/>
<dbReference type="DNASU" id="550055"/>
<dbReference type="GeneID" id="550055"/>
<dbReference type="KEGG" id="xtr:550055"/>
<dbReference type="AGR" id="Xenbase:XB-GENE-5731378"/>
<dbReference type="CTD" id="255967"/>
<dbReference type="Xenbase" id="XB-GENE-5731378">
    <property type="gene designation" value="pan3"/>
</dbReference>
<dbReference type="eggNOG" id="KOG3741">
    <property type="taxonomic scope" value="Eukaryota"/>
</dbReference>
<dbReference type="HOGENOM" id="CLU_016423_3_0_1"/>
<dbReference type="InParanoid" id="A1L1C7"/>
<dbReference type="OMA" id="ASHVINM"/>
<dbReference type="OrthoDB" id="204958at2759"/>
<dbReference type="PhylomeDB" id="A1L1C7"/>
<dbReference type="TreeFam" id="TF105865"/>
<dbReference type="Proteomes" id="UP000008143">
    <property type="component" value="Chromosome 2"/>
</dbReference>
<dbReference type="GO" id="GO:0000932">
    <property type="term" value="C:P-body"/>
    <property type="evidence" value="ECO:0007669"/>
    <property type="project" value="UniProtKB-SubCell"/>
</dbReference>
<dbReference type="GO" id="GO:0031251">
    <property type="term" value="C:PAN complex"/>
    <property type="evidence" value="ECO:0000250"/>
    <property type="project" value="UniProtKB"/>
</dbReference>
<dbReference type="GO" id="GO:0005524">
    <property type="term" value="F:ATP binding"/>
    <property type="evidence" value="ECO:0007669"/>
    <property type="project" value="UniProtKB-UniRule"/>
</dbReference>
<dbReference type="GO" id="GO:0004672">
    <property type="term" value="F:protein kinase activity"/>
    <property type="evidence" value="ECO:0007669"/>
    <property type="project" value="InterPro"/>
</dbReference>
<dbReference type="GO" id="GO:0003723">
    <property type="term" value="F:RNA binding"/>
    <property type="evidence" value="ECO:0007669"/>
    <property type="project" value="InterPro"/>
</dbReference>
<dbReference type="GO" id="GO:0008270">
    <property type="term" value="F:zinc ion binding"/>
    <property type="evidence" value="ECO:0007669"/>
    <property type="project" value="UniProtKB-KW"/>
</dbReference>
<dbReference type="GO" id="GO:0006397">
    <property type="term" value="P:mRNA processing"/>
    <property type="evidence" value="ECO:0007669"/>
    <property type="project" value="UniProtKB-KW"/>
</dbReference>
<dbReference type="GO" id="GO:0000289">
    <property type="term" value="P:nuclear-transcribed mRNA poly(A) tail shortening"/>
    <property type="evidence" value="ECO:0007669"/>
    <property type="project" value="UniProtKB-UniRule"/>
</dbReference>
<dbReference type="GO" id="GO:0010606">
    <property type="term" value="P:positive regulation of cytoplasmic mRNA processing body assembly"/>
    <property type="evidence" value="ECO:0007669"/>
    <property type="project" value="UniProtKB-UniRule"/>
</dbReference>
<dbReference type="FunFam" id="1.10.287.3700:FF:000001">
    <property type="entry name" value="PAN2-PAN3 deadenylation complex subunit PAN3"/>
    <property type="match status" value="1"/>
</dbReference>
<dbReference type="FunFam" id="1.10.510.10:FF:000168">
    <property type="entry name" value="PAN2-PAN3 deadenylation complex subunit PAN3"/>
    <property type="match status" value="1"/>
</dbReference>
<dbReference type="FunFam" id="1.20.5.5160:FF:000001">
    <property type="entry name" value="PAN2-PAN3 deadenylation complex subunit PAN3"/>
    <property type="match status" value="1"/>
</dbReference>
<dbReference type="Gene3D" id="1.10.287.3700">
    <property type="match status" value="1"/>
</dbReference>
<dbReference type="Gene3D" id="1.20.5.5160">
    <property type="match status" value="1"/>
</dbReference>
<dbReference type="Gene3D" id="1.10.510.10">
    <property type="entry name" value="Transferase(Phosphotransferase) domain 1"/>
    <property type="match status" value="1"/>
</dbReference>
<dbReference type="Gene3D" id="4.10.1000.10">
    <property type="entry name" value="Zinc finger, CCCH-type"/>
    <property type="match status" value="1"/>
</dbReference>
<dbReference type="HAMAP" id="MF_03181">
    <property type="entry name" value="PAN3"/>
    <property type="match status" value="1"/>
</dbReference>
<dbReference type="InterPro" id="IPR011009">
    <property type="entry name" value="Kinase-like_dom_sf"/>
</dbReference>
<dbReference type="InterPro" id="IPR030844">
    <property type="entry name" value="PAN3"/>
</dbReference>
<dbReference type="InterPro" id="IPR041332">
    <property type="entry name" value="Pan3_PK"/>
</dbReference>
<dbReference type="InterPro" id="IPR000719">
    <property type="entry name" value="Prot_kinase_dom"/>
</dbReference>
<dbReference type="InterPro" id="IPR000571">
    <property type="entry name" value="Znf_CCCH"/>
</dbReference>
<dbReference type="InterPro" id="IPR036855">
    <property type="entry name" value="Znf_CCCH_sf"/>
</dbReference>
<dbReference type="PANTHER" id="PTHR12272">
    <property type="entry name" value="DEADENYLATION COMPLEX SUBUNIT PAN3"/>
    <property type="match status" value="1"/>
</dbReference>
<dbReference type="PANTHER" id="PTHR12272:SF11">
    <property type="entry name" value="PAN2-PAN3 DEADENYLATION COMPLEX SUBUNIT PAN3"/>
    <property type="match status" value="1"/>
</dbReference>
<dbReference type="Pfam" id="PF18101">
    <property type="entry name" value="Pan3_PK"/>
    <property type="match status" value="1"/>
</dbReference>
<dbReference type="SMART" id="SM00356">
    <property type="entry name" value="ZnF_C3H1"/>
    <property type="match status" value="1"/>
</dbReference>
<dbReference type="SUPFAM" id="SSF90229">
    <property type="entry name" value="CCCH zinc finger"/>
    <property type="match status" value="1"/>
</dbReference>
<dbReference type="SUPFAM" id="SSF56112">
    <property type="entry name" value="Protein kinase-like (PK-like)"/>
    <property type="match status" value="1"/>
</dbReference>
<dbReference type="PROSITE" id="PS50011">
    <property type="entry name" value="PROTEIN_KINASE_DOM"/>
    <property type="match status" value="1"/>
</dbReference>
<dbReference type="PROSITE" id="PS50103">
    <property type="entry name" value="ZF_C3H1"/>
    <property type="match status" value="1"/>
</dbReference>
<keyword id="KW-0067">ATP-binding</keyword>
<keyword id="KW-0175">Coiled coil</keyword>
<keyword id="KW-0963">Cytoplasm</keyword>
<keyword id="KW-0479">Metal-binding</keyword>
<keyword id="KW-0507">mRNA processing</keyword>
<keyword id="KW-0547">Nucleotide-binding</keyword>
<keyword id="KW-1185">Reference proteome</keyword>
<keyword id="KW-0862">Zinc</keyword>
<keyword id="KW-0863">Zinc-finger</keyword>
<proteinExistence type="evidence at transcript level"/>
<evidence type="ECO:0000255" key="1">
    <source>
        <dbReference type="HAMAP-Rule" id="MF_03181"/>
    </source>
</evidence>
<evidence type="ECO:0000256" key="2">
    <source>
        <dbReference type="SAM" id="MobiDB-lite"/>
    </source>
</evidence>
<evidence type="ECO:0000305" key="3"/>
<gene>
    <name evidence="1" type="primary">pan3</name>
    <name type="ORF">TEgg127h19.1</name>
</gene>
<organism>
    <name type="scientific">Xenopus tropicalis</name>
    <name type="common">Western clawed frog</name>
    <name type="synonym">Silurana tropicalis</name>
    <dbReference type="NCBI Taxonomy" id="8364"/>
    <lineage>
        <taxon>Eukaryota</taxon>
        <taxon>Metazoa</taxon>
        <taxon>Chordata</taxon>
        <taxon>Craniata</taxon>
        <taxon>Vertebrata</taxon>
        <taxon>Euteleostomi</taxon>
        <taxon>Amphibia</taxon>
        <taxon>Batrachia</taxon>
        <taxon>Anura</taxon>
        <taxon>Pipoidea</taxon>
        <taxon>Pipidae</taxon>
        <taxon>Xenopodinae</taxon>
        <taxon>Xenopus</taxon>
        <taxon>Silurana</taxon>
    </lineage>
</organism>
<comment type="function">
    <text evidence="1">Regulatory subunit of the poly(A)-nuclease (PAN) deadenylation complex, one of two cytoplasmic mRNA deadenylases involved in general and miRNA-mediated mRNA turnover. PAN specifically shortens poly(A) tails of RNA and the activity is stimulated by poly(A)-binding protein (PABP). PAN deadenylation is followed by rapid degradation of the shortened mRNA tails by the CCR4-NOT complex. Deadenylated mRNAs are then degraded by two alternative mechanisms, namely exosome-mediated 3'-5' exonucleolytic degradation, or deadenylation-dependent mRNA decaping and subsequent 5'-3' exonucleolytic degradation by XRN1. PAN3 acts as a positive regulator for PAN activity, recruiting the catalytic subunit PAN2 to mRNA via its interaction with RNA and PABP, and to miRNA targets via its interaction with GW182 family proteins.</text>
</comment>
<comment type="subunit">
    <text evidence="1">Homodimer. Forms a heterotrimer with a catalytic subunit pan2 to form the poly(A)-nuclease (PAN) deadenylation complex. Interacts (via PAM-2 motif) with poly(A)-binding protein pabpc1 (via PABC domain), conferring substrate specificity of the enzyme complex. Interacts with the GW182 family proteins tnrc6a, tnrc6b and tnrc6c.</text>
</comment>
<comment type="subcellular location">
    <subcellularLocation>
        <location evidence="1">Cytoplasm</location>
        <location evidence="1">P-body</location>
    </subcellularLocation>
</comment>
<comment type="domain">
    <text evidence="1">The N-terminal zinc finger binds to poly(A) RNA.</text>
</comment>
<comment type="domain">
    <text evidence="1">Contains a pseudokinase domain. The protein kinase domain is predicted to be catalytically inactive because some of the residues important for catalytic activity are substituted and it lacks the equivalent of the binding site for a peptide substrate. However, it has retained an ATP-binding site and ATP-binding is required for mRNA degradation, stimulating the activity of the pan2 nuclease in vitro. The nucleotide-binding site is juxtaposed to the RNase active site of pan2 in the complex and may actually bind nucleosides of a poly(A) RNA rather than ATP, feeding the poly(A)-tail to the active site of the deadenylase and thus increasing the efficiency with which this distributive enzyme degrades oligo(A) RNAs.</text>
</comment>
<comment type="domain">
    <text evidence="1">The pseudokinase domain, the coiled-coil (CC), and C-terminal knob domain (CK) form a structural unit (PKC) that forms an extensive high-affinity interaction surface for pan2.</text>
</comment>
<comment type="similarity">
    <text evidence="1">Belongs to the protein kinase superfamily. PAN3 family.</text>
</comment>